<sequence length="377" mass="40578">MVNATLSVVQKNSAFVGSATGELAARAIGMLYPGVKQSDLSEEQKQTISTLATVSAGLAGGLTGSSTASAAVGAQSGKNAVENNYLSTNQSLTFDKELSDCRKSGGNCQDIIDKWEKISDEQSAEIDQKLKDNPLEAQVIDKEVAKGGYDMTQRPGWLGNIGVEVMTSDEAKAYVQKWNGRDLTKIDVNSPEWTKFAVFASDPENQAMLVSGGLLVKDITKAAISFMSRNTATATVNASEVGMQWGQGNMKQGMPWEDYVGKSLPADARLPKNFKIFDYYDGATKTATSVKSIDTQTMAKLANPNQVYSSIKGNIDAAAKFKEYALSGRELTSSMISNREIQLAIPADTTKTQWAEINRAIEYGKSQGVKVTVTQVK</sequence>
<comment type="function">
    <text evidence="1 2 3 4">Toxic component of a toxin-immunity protein module, which functions as a cellular contact-dependent growth inhibition (CDI) system. CDI modules allow bacteria to communicate with and inhibit the growth of closely related neighboring bacteria in a contact-dependent fashion (PubMed:21829394, PubMed:25174572). The C-terminal 289 residues (the CT fragment) has a strong DNase activity in the presence of Zn(2+), completely degrading supercoiled and linear plasmids, and inhibits growth. In the presence of Mg(2+) it nicks dsDNA (PubMed:23236156). Toxic activity is neutralized by coexpression of the cognate immunity protein CdiI-o11-EC869, but not by non-cognate immunity proteins from other toxin-immunity modules or other strains of E.coli (PubMed:21829394). Gains access to the cytoplasm of target cells by using integral inner membrane protein YciB (PubMed:26305955).</text>
</comment>
<comment type="function">
    <text evidence="1">Expression of this locus confers protection against other bacteria carrying the locus.</text>
</comment>
<comment type="cofactor">
    <cofactor evidence="2">
        <name>Zn(2+)</name>
        <dbReference type="ChEBI" id="CHEBI:29105"/>
    </cofactor>
    <text evidence="2">Bind 1 Zn(2+) per subunit.</text>
</comment>
<comment type="subunit">
    <text evidence="1 2">Interacts with cognate immunity protein CdiI-o11-EC869, which blocks its toxic DNase activity.</text>
</comment>
<comment type="subcellular location">
    <subcellularLocation>
        <location evidence="9">Target cell</location>
        <location evidence="9">Target cell cytoplasm</location>
    </subcellularLocation>
    <text evidence="3">Toxin translocation into the target cell depends on the proton motive force of the target cell, but not on tolA or tonB.</text>
</comment>
<comment type="domain">
    <text evidence="2 4 5">A beta-hairpin (residues 322-332) fits into a pocket in cognate immunity protein CdiI-o11 and helps confer immunity protein specificity (PubMed:23236156, PubMed:26449640). The inner membrane translocation domain (IMTD) targets the toxin to a specific target cell inner membrane protein (YciB in this case), which delivers the toxin to the target cell cytoplasm. Exchanging this IMTD between CdiA proteins alters the inner membrane protein delivery system but not the CdiI immunity protein, strongly suggesting CdiI recognizes only the toxic domain (PubMed:26305955).</text>
</comment>
<comment type="caution">
    <text evidence="7 8">The sequences characterized in (PubMed:21829394) and crystallized in (PubMed:23236156) are actually derived from cdiA-CTo11/cdiIo11, an orphan cdiA-CT/cdiI module that only encodes the cdiA CT fragment and its associated cdiI. It is however identical to that shown in this entry, which does have the elements necessary for gene expression.</text>
</comment>
<evidence type="ECO:0000269" key="1">
    <source>
    </source>
</evidence>
<evidence type="ECO:0000269" key="2">
    <source>
    </source>
</evidence>
<evidence type="ECO:0000269" key="3">
    <source>
    </source>
</evidence>
<evidence type="ECO:0000269" key="4">
    <source>
    </source>
</evidence>
<evidence type="ECO:0000269" key="5">
    <source>
    </source>
</evidence>
<evidence type="ECO:0000305" key="6"/>
<evidence type="ECO:0000305" key="7">
    <source>
    </source>
</evidence>
<evidence type="ECO:0000305" key="8">
    <source>
    </source>
</evidence>
<evidence type="ECO:0000305" key="9">
    <source>
    </source>
</evidence>
<evidence type="ECO:0007744" key="10">
    <source>
        <dbReference type="PDB" id="4G6U"/>
    </source>
</evidence>
<evidence type="ECO:0007744" key="11">
    <source>
        <dbReference type="PDB" id="4ZQW"/>
    </source>
</evidence>
<evidence type="ECO:0007829" key="12">
    <source>
        <dbReference type="PDB" id="4ZQW"/>
    </source>
</evidence>
<reference key="1">
    <citation type="journal article" date="2011" name="Appl. Environ. Microbiol.">
        <title>Genome signatures of Escherichia coli O157:H7 isolates from the bovine host reservoir.</title>
        <authorList>
            <person name="Eppinger M."/>
            <person name="Mammel M.K."/>
            <person name="Leclerc J.E."/>
            <person name="Ravel J."/>
            <person name="Cebula T.A."/>
        </authorList>
    </citation>
    <scope>NUCLEOTIDE SEQUENCE [LARGE SCALE GENOMIC DNA]</scope>
    <source>
        <strain>EC869</strain>
    </source>
</reference>
<reference key="2">
    <citation type="journal article" date="2011" name="PLoS Genet.">
        <title>Identification of functional toxin/immunity genes linked to contact-dependent growth inhibition (CDI) and rearrangement hotspot (Rhs) systems.</title>
        <authorList>
            <person name="Poole S.J."/>
            <person name="Diner E.J."/>
            <person name="Aoki S.K."/>
            <person name="Braaten B.A."/>
            <person name="t'Kint de Roodenbeke C."/>
            <person name="Low D.A."/>
            <person name="Hayes C.S."/>
        </authorList>
    </citation>
    <scope>FUNCTION</scope>
    <scope>INTERACTION WITH CDII</scope>
    <scope>SUBUNIT</scope>
    <source>
        <strain>EC869</strain>
    </source>
</reference>
<reference key="3">
    <citation type="journal article" date="2014" name="Mol. Microbiol.">
        <title>The proton-motive force is required for translocation of CDI toxins across the inner membrane of target bacteria.</title>
        <authorList>
            <person name="Ruhe Z.C."/>
            <person name="Nguyen J.Y."/>
            <person name="Beck C.M."/>
            <person name="Low D.A."/>
            <person name="Hayes C.S."/>
        </authorList>
    </citation>
    <scope>FUNCTION</scope>
    <scope>REQUIRES PMF FOR TRANSLOCATION</scope>
    <scope>SUBCELLULAR LOCATION</scope>
    <source>
        <strain>EC869</strain>
    </source>
</reference>
<reference key="4">
    <citation type="journal article" date="2015" name="Proc. Natl. Acad. Sci. U.S.A.">
        <title>Contact-dependent growth inhibition toxins exploit multiple independent cell-entry pathways.</title>
        <authorList>
            <person name="Willett J.L."/>
            <person name="Gucinski G.C."/>
            <person name="Fatherree J.P."/>
            <person name="Low D.A."/>
            <person name="Hayes C.S."/>
        </authorList>
    </citation>
    <scope>FUNCTION</scope>
    <scope>IDENTIFICATION OF RECEPTOR FOR ENTRY INTO TARGET CELL CYTOPLASM</scope>
    <scope>DOMAIN</scope>
    <source>
        <strain>EC869</strain>
    </source>
</reference>
<reference evidence="10" key="5">
    <citation type="journal article" date="2012" name="Proc. Natl. Acad. Sci. U.S.A.">
        <title>Structural basis of toxicity and immunity in contact-dependent growth inhibition (CDI) systems.</title>
        <authorList>
            <person name="Morse R.P."/>
            <person name="Nikolakakis K.C."/>
            <person name="Willett J.L."/>
            <person name="Gerrick E."/>
            <person name="Low D.A."/>
            <person name="Hayes C.S."/>
            <person name="Goulding C.W."/>
        </authorList>
    </citation>
    <scope>X-RAY CRYSTALLOGRAPHY (2.35 ANGSTROMS) OF 88-377 IN COMPLEX WITH CDII AND ZINC</scope>
    <scope>FUNCTION</scope>
    <scope>COFACTOR</scope>
    <scope>SUBUNIT</scope>
    <scope>DOMAIN</scope>
    <scope>MUTAGENESIS OF GLU-257 AND ASP-278</scope>
    <source>
        <strain>EC869</strain>
    </source>
</reference>
<reference evidence="11" key="6">
    <citation type="journal article" date="2015" name="J. Mol. Biol.">
        <title>Diversification of beta-augmentation interactions between CDI toxin/immunity proteins.</title>
        <authorList>
            <person name="Morse R.P."/>
            <person name="Willett J.L."/>
            <person name="Johnson P.M."/>
            <person name="Zheng J."/>
            <person name="Credali A."/>
            <person name="Iniguez A."/>
            <person name="Nowick J.S."/>
            <person name="Hayes C.S."/>
            <person name="Goulding C.W."/>
        </authorList>
    </citation>
    <scope>X-RAY CRYSTALLOGRAPHY (2.00 ANGSTROMS) OF 322-332</scope>
    <scope>DOMAIN</scope>
    <scope>MUTAGENESIS OF 322-LYS--THR-332; 322-LYS--GLU-330 AND 323-GLU--ARG-329</scope>
</reference>
<dbReference type="EC" id="3.1.-.-" evidence="2"/>
<dbReference type="EMBL" id="ABHU01000020">
    <property type="protein sequence ID" value="EDU89618.1"/>
    <property type="molecule type" value="Genomic_DNA"/>
</dbReference>
<dbReference type="PDB" id="4G6U">
    <property type="method" value="X-ray"/>
    <property type="resolution" value="2.35 A"/>
    <property type="chains" value="A=88-377"/>
</dbReference>
<dbReference type="PDB" id="4ZQW">
    <property type="method" value="X-ray"/>
    <property type="resolution" value="2.00 A"/>
    <property type="chains" value="A/C=322-332"/>
</dbReference>
<dbReference type="PDBsum" id="4G6U"/>
<dbReference type="PDBsum" id="4ZQW"/>
<dbReference type="SMR" id="B3BM80"/>
<dbReference type="Proteomes" id="UP000004641">
    <property type="component" value="Unassembled WGS sequence"/>
</dbReference>
<dbReference type="GO" id="GO:0004530">
    <property type="term" value="F:deoxyribonuclease I activity"/>
    <property type="evidence" value="ECO:0007669"/>
    <property type="project" value="InterPro"/>
</dbReference>
<dbReference type="GO" id="GO:0046872">
    <property type="term" value="F:metal ion binding"/>
    <property type="evidence" value="ECO:0007669"/>
    <property type="project" value="UniProtKB-KW"/>
</dbReference>
<dbReference type="GO" id="GO:0090729">
    <property type="term" value="F:toxin activity"/>
    <property type="evidence" value="ECO:0007669"/>
    <property type="project" value="UniProtKB-KW"/>
</dbReference>
<dbReference type="CDD" id="cd13444">
    <property type="entry name" value="CDI_toxin_EC869_like"/>
    <property type="match status" value="1"/>
</dbReference>
<dbReference type="Gene3D" id="3.40.1350.110">
    <property type="match status" value="1"/>
</dbReference>
<dbReference type="Gene3D" id="6.10.140.1810">
    <property type="match status" value="1"/>
</dbReference>
<dbReference type="InterPro" id="IPR033799">
    <property type="entry name" value="CdiA_EC869-like"/>
</dbReference>
<dbReference type="InterPro" id="IPR048745">
    <property type="entry name" value="CdiA_helical"/>
</dbReference>
<dbReference type="InterPro" id="IPR006914">
    <property type="entry name" value="VENN_dom"/>
</dbReference>
<dbReference type="Pfam" id="PF21111">
    <property type="entry name" value="CDI_toxin_EC869_like"/>
    <property type="match status" value="1"/>
</dbReference>
<dbReference type="Pfam" id="PF21483">
    <property type="entry name" value="CdiA_helical"/>
    <property type="match status" value="1"/>
</dbReference>
<dbReference type="Pfam" id="PF04829">
    <property type="entry name" value="PT-VENN"/>
    <property type="match status" value="1"/>
</dbReference>
<proteinExistence type="evidence at protein level"/>
<organism>
    <name type="scientific">Escherichia coli O157:H7 (strain EC869)</name>
    <dbReference type="NCBI Taxonomy" id="478008"/>
    <lineage>
        <taxon>Bacteria</taxon>
        <taxon>Pseudomonadati</taxon>
        <taxon>Pseudomonadota</taxon>
        <taxon>Gammaproteobacteria</taxon>
        <taxon>Enterobacterales</taxon>
        <taxon>Enterobacteriaceae</taxon>
        <taxon>Escherichia</taxon>
    </lineage>
</organism>
<accession>B3BM80</accession>
<protein>
    <recommendedName>
        <fullName>Deoxyribonuclease CdiA-o11</fullName>
        <shortName>DNase CdiA</shortName>
        <ecNumber evidence="2">3.1.-.-</ecNumber>
    </recommendedName>
    <alternativeName>
        <fullName>CdiA-o11-EC869</fullName>
    </alternativeName>
    <alternativeName>
        <fullName>Toxin CdiA</fullName>
    </alternativeName>
</protein>
<name>CDIA4_ECO5C</name>
<feature type="chain" id="PRO_0000429689" description="Deoxyribonuclease CdiA-o11">
    <location>
        <begin position="1"/>
        <end position="377"/>
    </location>
</feature>
<feature type="region of interest" description="Inner membrane translocation domain (IMTD), targets to YciB" evidence="4">
    <location>
        <begin position="85"/>
        <end position="233"/>
    </location>
</feature>
<feature type="region of interest" description="CT domain, sufficient to interact with CdiI" evidence="8">
    <location>
        <begin position="88"/>
        <end position="377"/>
    </location>
</feature>
<feature type="region of interest" description="Has DNase activity in vivo, cannot be expressed in the absence of CdiI" evidence="8">
    <location>
        <begin position="222"/>
        <end position="377"/>
    </location>
</feature>
<feature type="short sequence motif" description="VENN CT cleavage motif" evidence="6">
    <location>
        <begin position="81"/>
        <end position="84"/>
    </location>
</feature>
<feature type="active site" evidence="8">
    <location>
        <position position="257"/>
    </location>
</feature>
<feature type="active site" evidence="8">
    <location>
        <position position="278"/>
    </location>
</feature>
<feature type="active site" evidence="8">
    <location>
        <position position="289"/>
    </location>
</feature>
<feature type="active site" evidence="8">
    <location>
        <position position="291"/>
    </location>
</feature>
<feature type="binding site" evidence="2">
    <location>
        <position position="257"/>
    </location>
    <ligand>
        <name>Zn(2+)</name>
        <dbReference type="ChEBI" id="CHEBI:29105"/>
    </ligand>
</feature>
<feature type="binding site" evidence="2">
    <location>
        <position position="278"/>
    </location>
    <ligand>
        <name>Zn(2+)</name>
        <dbReference type="ChEBI" id="CHEBI:29105"/>
    </ligand>
</feature>
<feature type="mutagenesis site" description="Loss of DNase activity in vitro." evidence="2">
    <original>E</original>
    <variation>A</variation>
    <location>
        <position position="257"/>
    </location>
</feature>
<feature type="mutagenesis site" description="Loss of DNase activity in vitro and in vivo. Unable to inhibit target cell growth via CDI." evidence="2">
    <original>D</original>
    <variation>A</variation>
    <location>
        <position position="278"/>
    </location>
</feature>
<feature type="mutagenesis site" description="No longer interacts with cognate CdiI-o11, loss of DNase activity." evidence="5">
    <original>KEYALSGRELT</original>
    <variation>GSG</variation>
    <location>
        <begin position="322"/>
        <end position="332"/>
    </location>
</feature>
<feature type="mutagenesis site" description="No longer interacts with cognate immunity protein CdiI-o11." evidence="5">
    <original>KEYALSGRE</original>
    <variation>HTHTLSGEQ</variation>
    <location>
        <begin position="322"/>
        <end position="330"/>
    </location>
</feature>
<feature type="mutagenesis site" description="Still interacts with cognate immunity protein CdiI-o11." evidence="5">
    <original>EYALSGR</original>
    <variation>TYSLSGV</variation>
    <location>
        <begin position="323"/>
        <end position="329"/>
    </location>
</feature>
<feature type="strand" evidence="12">
    <location>
        <begin position="324"/>
        <end position="326"/>
    </location>
</feature>
<feature type="strand" evidence="12">
    <location>
        <begin position="329"/>
        <end position="331"/>
    </location>
</feature>
<gene>
    <name type="primary">cdiA4</name>
    <name type="synonym">cdiA-CTo11</name>
    <name type="ORF">ECH7EC869_5883</name>
</gene>
<keyword id="KW-0002">3D-structure</keyword>
<keyword id="KW-0378">Hydrolase</keyword>
<keyword id="KW-0479">Metal-binding</keyword>
<keyword id="KW-0540">Nuclease</keyword>
<keyword id="KW-1266">Target cell cytoplasm</keyword>
<keyword id="KW-0800">Toxin</keyword>
<keyword id="KW-0843">Virulence</keyword>
<keyword id="KW-0862">Zinc</keyword>